<evidence type="ECO:0000255" key="1">
    <source>
        <dbReference type="HAMAP-Rule" id="MF_00137"/>
    </source>
</evidence>
<name>PUR7_SHEPW</name>
<gene>
    <name evidence="1" type="primary">purC</name>
    <name type="ordered locus">swp_3011</name>
</gene>
<comment type="catalytic activity">
    <reaction evidence="1">
        <text>5-amino-1-(5-phospho-D-ribosyl)imidazole-4-carboxylate + L-aspartate + ATP = (2S)-2-[5-amino-1-(5-phospho-beta-D-ribosyl)imidazole-4-carboxamido]succinate + ADP + phosphate + 2 H(+)</text>
        <dbReference type="Rhea" id="RHEA:22628"/>
        <dbReference type="ChEBI" id="CHEBI:15378"/>
        <dbReference type="ChEBI" id="CHEBI:29991"/>
        <dbReference type="ChEBI" id="CHEBI:30616"/>
        <dbReference type="ChEBI" id="CHEBI:43474"/>
        <dbReference type="ChEBI" id="CHEBI:58443"/>
        <dbReference type="ChEBI" id="CHEBI:77657"/>
        <dbReference type="ChEBI" id="CHEBI:456216"/>
        <dbReference type="EC" id="6.3.2.6"/>
    </reaction>
</comment>
<comment type="pathway">
    <text evidence="1">Purine metabolism; IMP biosynthesis via de novo pathway; 5-amino-1-(5-phospho-D-ribosyl)imidazole-4-carboxamide from 5-amino-1-(5-phospho-D-ribosyl)imidazole-4-carboxylate: step 1/2.</text>
</comment>
<comment type="similarity">
    <text evidence="1">Belongs to the SAICAR synthetase family.</text>
</comment>
<accession>B8CR57</accession>
<organism>
    <name type="scientific">Shewanella piezotolerans (strain WP3 / JCM 13877)</name>
    <dbReference type="NCBI Taxonomy" id="225849"/>
    <lineage>
        <taxon>Bacteria</taxon>
        <taxon>Pseudomonadati</taxon>
        <taxon>Pseudomonadota</taxon>
        <taxon>Gammaproteobacteria</taxon>
        <taxon>Alteromonadales</taxon>
        <taxon>Shewanellaceae</taxon>
        <taxon>Shewanella</taxon>
    </lineage>
</organism>
<keyword id="KW-0067">ATP-binding</keyword>
<keyword id="KW-0436">Ligase</keyword>
<keyword id="KW-0547">Nucleotide-binding</keyword>
<keyword id="KW-0658">Purine biosynthesis</keyword>
<sequence>MNLADKVLVVNDNLPIRTDKPVHSGKVRSVYWLTPEDSARLIKDKGYDVPADAPLAIMVISDRISAFDCVWQGENGLNGVPGKGTALNAISNHWFKLFKEKGLADSHILDIPHPLVWIVQKARPVMIEAIARQYITGSMWRSYTKGEREFCGITIPEGLEKDQKLPELLITPSTKGVLTGLEGVPEADDVNVSRSDIERHVDGFNFSSLSDIDLYEKLLKEGFDVISDALAEHDQIFVDTKFEFGYVNDAAGNEKLIYMDEVGTPDSSRIWDGSSHRDGKIIEQSKEGFRQWLLNHFPDADILLNKNRMEERFALAKDNKLPESVMMDISNTYVGIAEKVIGEKLHISENPKQEIIDILRSEYQLIV</sequence>
<proteinExistence type="inferred from homology"/>
<feature type="chain" id="PRO_1000117852" description="Phosphoribosylaminoimidazole-succinocarboxamide synthase">
    <location>
        <begin position="1"/>
        <end position="367"/>
    </location>
</feature>
<dbReference type="EC" id="6.3.2.6" evidence="1"/>
<dbReference type="EMBL" id="CP000472">
    <property type="protein sequence ID" value="ACJ29729.1"/>
    <property type="molecule type" value="Genomic_DNA"/>
</dbReference>
<dbReference type="RefSeq" id="WP_020913083.1">
    <property type="nucleotide sequence ID" value="NC_011566.1"/>
</dbReference>
<dbReference type="SMR" id="B8CR57"/>
<dbReference type="STRING" id="225849.swp_3011"/>
<dbReference type="KEGG" id="swp:swp_3011"/>
<dbReference type="eggNOG" id="COG0152">
    <property type="taxonomic scope" value="Bacteria"/>
</dbReference>
<dbReference type="HOGENOM" id="CLU_064197_0_0_6"/>
<dbReference type="OrthoDB" id="9801549at2"/>
<dbReference type="UniPathway" id="UPA00074">
    <property type="reaction ID" value="UER00131"/>
</dbReference>
<dbReference type="Proteomes" id="UP000000753">
    <property type="component" value="Chromosome"/>
</dbReference>
<dbReference type="GO" id="GO:0005737">
    <property type="term" value="C:cytoplasm"/>
    <property type="evidence" value="ECO:0007669"/>
    <property type="project" value="TreeGrafter"/>
</dbReference>
<dbReference type="GO" id="GO:0005524">
    <property type="term" value="F:ATP binding"/>
    <property type="evidence" value="ECO:0007669"/>
    <property type="project" value="UniProtKB-KW"/>
</dbReference>
<dbReference type="GO" id="GO:0004639">
    <property type="term" value="F:phosphoribosylaminoimidazolesuccinocarboxamide synthase activity"/>
    <property type="evidence" value="ECO:0007669"/>
    <property type="project" value="UniProtKB-UniRule"/>
</dbReference>
<dbReference type="GO" id="GO:0006189">
    <property type="term" value="P:'de novo' IMP biosynthetic process"/>
    <property type="evidence" value="ECO:0007669"/>
    <property type="project" value="UniProtKB-UniRule"/>
</dbReference>
<dbReference type="CDD" id="cd01414">
    <property type="entry name" value="SAICAR_synt_Sc"/>
    <property type="match status" value="1"/>
</dbReference>
<dbReference type="Gene3D" id="3.30.470.20">
    <property type="entry name" value="ATP-grasp fold, B domain"/>
    <property type="match status" value="1"/>
</dbReference>
<dbReference type="Gene3D" id="3.30.200.20">
    <property type="entry name" value="Phosphorylase Kinase, domain 1"/>
    <property type="match status" value="1"/>
</dbReference>
<dbReference type="HAMAP" id="MF_00137">
    <property type="entry name" value="SAICAR_synth"/>
    <property type="match status" value="1"/>
</dbReference>
<dbReference type="InterPro" id="IPR028923">
    <property type="entry name" value="SAICAR_synt/ADE2_N"/>
</dbReference>
<dbReference type="InterPro" id="IPR014106">
    <property type="entry name" value="SAICAR_synthase_Vibrio-typ"/>
</dbReference>
<dbReference type="NCBIfam" id="NF010567">
    <property type="entry name" value="PRK13960.1"/>
    <property type="match status" value="1"/>
</dbReference>
<dbReference type="NCBIfam" id="TIGR02735">
    <property type="entry name" value="purC_vibrio"/>
    <property type="match status" value="1"/>
</dbReference>
<dbReference type="PANTHER" id="PTHR43700">
    <property type="entry name" value="PHOSPHORIBOSYLAMINOIMIDAZOLE-SUCCINOCARBOXAMIDE SYNTHASE"/>
    <property type="match status" value="1"/>
</dbReference>
<dbReference type="PANTHER" id="PTHR43700:SF1">
    <property type="entry name" value="PHOSPHORIBOSYLAMINOIMIDAZOLE-SUCCINOCARBOXAMIDE SYNTHASE"/>
    <property type="match status" value="1"/>
</dbReference>
<dbReference type="Pfam" id="PF01259">
    <property type="entry name" value="SAICAR_synt"/>
    <property type="match status" value="1"/>
</dbReference>
<dbReference type="SUPFAM" id="SSF56104">
    <property type="entry name" value="SAICAR synthase-like"/>
    <property type="match status" value="1"/>
</dbReference>
<reference key="1">
    <citation type="journal article" date="2008" name="PLoS ONE">
        <title>Environmental adaptation: genomic analysis of the piezotolerant and psychrotolerant deep-sea iron reducing bacterium Shewanella piezotolerans WP3.</title>
        <authorList>
            <person name="Wang F."/>
            <person name="Wang J."/>
            <person name="Jian H."/>
            <person name="Zhang B."/>
            <person name="Li S."/>
            <person name="Wang F."/>
            <person name="Zeng X."/>
            <person name="Gao L."/>
            <person name="Bartlett D.H."/>
            <person name="Yu J."/>
            <person name="Hu S."/>
            <person name="Xiao X."/>
        </authorList>
    </citation>
    <scope>NUCLEOTIDE SEQUENCE [LARGE SCALE GENOMIC DNA]</scope>
    <source>
        <strain>WP3 / JCM 13877</strain>
    </source>
</reference>
<protein>
    <recommendedName>
        <fullName evidence="1">Phosphoribosylaminoimidazole-succinocarboxamide synthase</fullName>
        <ecNumber evidence="1">6.3.2.6</ecNumber>
    </recommendedName>
    <alternativeName>
        <fullName evidence="1">SAICAR synthetase</fullName>
    </alternativeName>
</protein>